<proteinExistence type="evidence at protein level"/>
<keyword id="KW-0472">Membrane</keyword>
<keyword id="KW-0597">Phosphoprotein</keyword>
<keyword id="KW-0964">Secreted</keyword>
<keyword id="KW-0732">Signal</keyword>
<evidence type="ECO:0000255" key="1"/>
<evidence type="ECO:0000255" key="2">
    <source>
        <dbReference type="PROSITE-ProRule" id="PRU00159"/>
    </source>
</evidence>
<evidence type="ECO:0000256" key="3">
    <source>
        <dbReference type="SAM" id="MobiDB-lite"/>
    </source>
</evidence>
<evidence type="ECO:0000269" key="4">
    <source>
    </source>
</evidence>
<evidence type="ECO:0000305" key="5"/>
<evidence type="ECO:0000312" key="6">
    <source>
        <dbReference type="EMBL" id="AAU87405.1"/>
    </source>
</evidence>
<evidence type="ECO:0000312" key="7">
    <source>
        <dbReference type="EMBL" id="CAA96467.1"/>
    </source>
</evidence>
<accession>Q5Y808</accession>
<accession>Q9U0D6</accession>
<comment type="function">
    <text evidence="4">Thought to play a role in parasitophorous vacuole membrane function during the infection of host organisms.</text>
</comment>
<comment type="subcellular location">
    <subcellularLocation>
        <location evidence="4">Secreted</location>
    </subcellularLocation>
    <subcellularLocation>
        <location evidence="4">Parasitophorous vacuole membrane</location>
    </subcellularLocation>
    <text>Localized to rhoptries which are secretory organelles at the apical end of the parasite and secreted during host cell invasion when it becomes associated with the parasitophorous vacuole membrane.</text>
</comment>
<comment type="PTM">
    <text evidence="4">Phosphorylated on multiple serine and threonine residues in parasitic extracts and infected cells but not in extracellular parasites.</text>
</comment>
<comment type="caution">
    <text evidence="4">Lacks the active site residue so is predicted to be catalytically inactive.</text>
</comment>
<dbReference type="EMBL" id="AY662677">
    <property type="protein sequence ID" value="AAU87405.1"/>
    <property type="molecule type" value="Genomic_DNA"/>
</dbReference>
<dbReference type="EMBL" id="AM055942">
    <property type="protein sequence ID" value="CAJ20303.1"/>
    <property type="molecule type" value="Genomic_DNA"/>
</dbReference>
<dbReference type="EMBL" id="Z71787">
    <property type="protein sequence ID" value="CAA96467.1"/>
    <property type="molecule type" value="Genomic_DNA"/>
</dbReference>
<dbReference type="SMR" id="Q5Y808"/>
<dbReference type="VEuPathDB" id="ToxoDB:TGARI_295110"/>
<dbReference type="VEuPathDB" id="ToxoDB:TGCAST_295125"/>
<dbReference type="VEuPathDB" id="ToxoDB:TGCAST_365010"/>
<dbReference type="VEuPathDB" id="ToxoDB:TGCOUG_396160"/>
<dbReference type="VEuPathDB" id="ToxoDB:TGDOM2_295110"/>
<dbReference type="VEuPathDB" id="ToxoDB:TGFOU_295125"/>
<dbReference type="VEuPathDB" id="ToxoDB:TGFOU_365080"/>
<dbReference type="VEuPathDB" id="ToxoDB:TGGT1_295110"/>
<dbReference type="VEuPathDB" id="ToxoDB:TGMAS_295125"/>
<dbReference type="VEuPathDB" id="ToxoDB:TGMAS_417850"/>
<dbReference type="VEuPathDB" id="ToxoDB:TGME49_295110"/>
<dbReference type="VEuPathDB" id="ToxoDB:TGP89_421470"/>
<dbReference type="VEuPathDB" id="ToxoDB:TGPRC2_295110"/>
<dbReference type="VEuPathDB" id="ToxoDB:TGRH88_020200"/>
<dbReference type="VEuPathDB" id="ToxoDB:TGRUB_365010"/>
<dbReference type="VEuPathDB" id="ToxoDB:TGRUB_434430"/>
<dbReference type="VEuPathDB" id="ToxoDB:TGVAND_295105"/>
<dbReference type="VEuPathDB" id="ToxoDB:TGVAND_438930"/>
<dbReference type="VEuPathDB" id="ToxoDB:TGVEG_295110"/>
<dbReference type="InParanoid" id="Q5Y808"/>
<dbReference type="GO" id="GO:0016020">
    <property type="term" value="C:membrane"/>
    <property type="evidence" value="ECO:0007669"/>
    <property type="project" value="UniProtKB-KW"/>
</dbReference>
<dbReference type="GO" id="GO:0020008">
    <property type="term" value="C:rhoptry"/>
    <property type="evidence" value="ECO:0000314"/>
    <property type="project" value="UniProtKB"/>
</dbReference>
<dbReference type="GO" id="GO:0020005">
    <property type="term" value="C:symbiont-containing vacuole membrane"/>
    <property type="evidence" value="ECO:0000314"/>
    <property type="project" value="UniProtKB"/>
</dbReference>
<dbReference type="GO" id="GO:0005524">
    <property type="term" value="F:ATP binding"/>
    <property type="evidence" value="ECO:0007669"/>
    <property type="project" value="InterPro"/>
</dbReference>
<dbReference type="GO" id="GO:0044409">
    <property type="term" value="P:symbiont entry into host"/>
    <property type="evidence" value="ECO:0000270"/>
    <property type="project" value="UniProtKB"/>
</dbReference>
<dbReference type="Gene3D" id="3.30.200.20">
    <property type="entry name" value="Phosphorylase Kinase, domain 1"/>
    <property type="match status" value="1"/>
</dbReference>
<dbReference type="Gene3D" id="1.10.510.10">
    <property type="entry name" value="Transferase(Phosphotransferase) domain 1"/>
    <property type="match status" value="1"/>
</dbReference>
<dbReference type="InterPro" id="IPR027916">
    <property type="entry name" value="Kinase-like_dom_Apicomplexa"/>
</dbReference>
<dbReference type="InterPro" id="IPR011009">
    <property type="entry name" value="Kinase-like_dom_sf"/>
</dbReference>
<dbReference type="InterPro" id="IPR000719">
    <property type="entry name" value="Prot_kinase_dom"/>
</dbReference>
<dbReference type="InterPro" id="IPR016815">
    <property type="entry name" value="Rhoptry_Rop2-like"/>
</dbReference>
<dbReference type="Pfam" id="PF14531">
    <property type="entry name" value="Kinase-like"/>
    <property type="match status" value="1"/>
</dbReference>
<dbReference type="PIRSF" id="PIRSF022995">
    <property type="entry name" value="Rhoptry_ROP2"/>
    <property type="match status" value="1"/>
</dbReference>
<dbReference type="SUPFAM" id="SSF56112">
    <property type="entry name" value="Protein kinase-like (PK-like)"/>
    <property type="match status" value="1"/>
</dbReference>
<dbReference type="PROSITE" id="PS50011">
    <property type="entry name" value="PROTEIN_KINASE_DOM"/>
    <property type="match status" value="1"/>
</dbReference>
<reference evidence="5 6" key="1">
    <citation type="journal article" date="2004" name="Eukaryot. Cell">
        <title>The Toxoplasma gondii rhoptry protein rop4 is secreted into the parasitophorous vacuole and becomes phosphorylated in infected cells.</title>
        <authorList>
            <person name="Carey K.L."/>
            <person name="Jongco A.M."/>
            <person name="Kim K."/>
            <person name="Ward G.E."/>
        </authorList>
    </citation>
    <scope>NUCLEOTIDE SEQUENCE [GENOMIC DNA / MRNA]</scope>
    <scope>SUBCELLULAR LOCATION</scope>
    <scope>PHOSPHORYLATION</scope>
    <source>
        <strain evidence="6">RH</strain>
    </source>
</reference>
<reference key="2">
    <citation type="journal article" date="2006" name="Genome Res.">
        <title>Common inheritance of chromosome Ia associated with clonal expansion of Toxoplasma gondii.</title>
        <authorList>
            <person name="Khan A."/>
            <person name="Bohme U."/>
            <person name="Kelly K.A."/>
            <person name="Adlem E."/>
            <person name="Brooks K."/>
            <person name="Simmonds M."/>
            <person name="Mungall K."/>
            <person name="Quail M.A."/>
            <person name="Arrowsmith C."/>
            <person name="Chillingworth T."/>
            <person name="Churcher C."/>
            <person name="Harris D."/>
            <person name="Collins M."/>
            <person name="Fosker N."/>
            <person name="Fraser A."/>
            <person name="Hance Z."/>
            <person name="Jagels K."/>
            <person name="Moule S."/>
            <person name="Murphy L."/>
            <person name="O'Neil S."/>
            <person name="Rajandream M.-A."/>
            <person name="Saunders D."/>
            <person name="Seeger K."/>
            <person name="Whitehead S."/>
            <person name="Mayr T."/>
            <person name="Xuan X."/>
            <person name="Watanabe J."/>
            <person name="Suzuki Y."/>
            <person name="Wakaguri H."/>
            <person name="Sugano S."/>
            <person name="Sugimoto C."/>
            <person name="Paulsen I."/>
            <person name="Mackey A.J."/>
            <person name="Roos D.S."/>
            <person name="Hall N."/>
            <person name="Berriman M."/>
            <person name="Barrell B."/>
            <person name="Sibley L.D."/>
            <person name="Ajioka J.W."/>
        </authorList>
    </citation>
    <scope>NUCLEOTIDE SEQUENCE [GENOMIC DNA]</scope>
    <source>
        <strain>RH</strain>
    </source>
</reference>
<reference evidence="5 7" key="3">
    <citation type="submission" date="2000-01" db="EMBL/GenBank/DDBJ databases">
        <title>ROP 4 of Toxoplasma gondii.</title>
        <authorList>
            <person name="Fourmaux M."/>
            <person name="Touzel J."/>
        </authorList>
    </citation>
    <scope>NUCLEOTIDE SEQUENCE [GENOMIC DNA]</scope>
    <source>
        <strain evidence="7">RH</strain>
    </source>
</reference>
<sequence>MGHPTSFGQPSCLVWLAAAFLVLGLCLVQQGAGRQRPHQWKSSEAALSVSPAGDIVDKYSRDSTEGENTVSEGEAEGSRGGSWLEQEGVELRSPSQDSQTGTSTASPTGFRRLLRRLRFWRRGSTRGSDDAAEVSRRTRVPLHTRLLQHLRRVARIIRHGVSAAAGRLFGRVRQVEAERPQPVFTEGDPPDLETNSLYYRDKVPGQGIIQEILRQKPGIAHHPESFSVVAADERVSRTLWAEGGVVRVASELGQPGRVLVRGRRIGLFRPGMQFEATDQATGEPMTALVGHTVLEATARDVDSMRNEGLAVGLFQKVKNPYLANRYLRFLAPFDLVTIPGKPLVQKAKSRNEVGWVKNLLFLLPPTHVDMETFVDEIGRFPQEDRPLADAARLYLTVQAVRLVAHLQDEGVVHGKIMPDSFCLKREGGLYLRDFGSLVRAGAKVVVPAEYDEYTPPEGRAAARSRFGSGATTMTYAFDAWTLGSVIFLIWCSRAPDTKSGYEYSVEFFFSRCRRVPENVKLLVYKLINPSVEARLLALQAIETPEYREMEEQLSAASRLYSGDGTLTGGDDDMPPLET</sequence>
<name>ROP4_TOXGO</name>
<organism>
    <name type="scientific">Toxoplasma gondii</name>
    <dbReference type="NCBI Taxonomy" id="5811"/>
    <lineage>
        <taxon>Eukaryota</taxon>
        <taxon>Sar</taxon>
        <taxon>Alveolata</taxon>
        <taxon>Apicomplexa</taxon>
        <taxon>Conoidasida</taxon>
        <taxon>Coccidia</taxon>
        <taxon>Eucoccidiorida</taxon>
        <taxon>Eimeriorina</taxon>
        <taxon>Sarcocystidae</taxon>
        <taxon>Toxoplasma</taxon>
    </lineage>
</organism>
<gene>
    <name evidence="6" type="primary">ROP4</name>
    <name type="ORF">TgIa.0490</name>
</gene>
<protein>
    <recommendedName>
        <fullName>Rhoptry protein 4</fullName>
    </recommendedName>
</protein>
<feature type="signal peptide" evidence="1">
    <location>
        <begin position="1"/>
        <end position="33"/>
    </location>
</feature>
<feature type="chain" id="PRO_0000252103" description="Rhoptry protein 4" evidence="1">
    <location>
        <begin position="34"/>
        <end position="578"/>
    </location>
</feature>
<feature type="domain" description="Protein kinase" evidence="2">
    <location>
        <begin position="259"/>
        <end position="546"/>
    </location>
</feature>
<feature type="region of interest" description="Disordered" evidence="3">
    <location>
        <begin position="56"/>
        <end position="82"/>
    </location>
</feature>
<feature type="region of interest" description="Disordered" evidence="3">
    <location>
        <begin position="559"/>
        <end position="578"/>
    </location>
</feature>
<feature type="compositionally biased region" description="Acidic residues" evidence="3">
    <location>
        <begin position="569"/>
        <end position="578"/>
    </location>
</feature>
<feature type="sequence conflict" description="In Ref. 3; CAA96467." evidence="5" ref="3">
    <original>AAGRLFGRVRQVEAERPQPVFTEGDP</original>
    <variation>PLADCSGEFGKLRRNVHNPFSLKVS</variation>
    <location>
        <begin position="164"/>
        <end position="189"/>
    </location>
</feature>
<feature type="sequence conflict" description="In Ref. 3; CAA96467." evidence="5" ref="3">
    <original>A</original>
    <variation>R</variation>
    <location>
        <position position="556"/>
    </location>
</feature>